<name>EF1B_SACI6</name>
<comment type="function">
    <text evidence="1">Promotes the exchange of GDP for GTP in EF-1-alpha/GDP, thus allowing the regeneration of EF-1-alpha/GTP that could then be used to form the ternary complex EF-1-alpha/GTP/AAtRNA.</text>
</comment>
<comment type="similarity">
    <text evidence="1">Belongs to the EF-1-beta/EF-1-delta family.</text>
</comment>
<accession>C4KJ07</accession>
<reference key="1">
    <citation type="journal article" date="2009" name="Proc. Natl. Acad. Sci. U.S.A.">
        <title>Biogeography of the Sulfolobus islandicus pan-genome.</title>
        <authorList>
            <person name="Reno M.L."/>
            <person name="Held N.L."/>
            <person name="Fields C.J."/>
            <person name="Burke P.V."/>
            <person name="Whitaker R.J."/>
        </authorList>
    </citation>
    <scope>NUCLEOTIDE SEQUENCE [LARGE SCALE GENOMIC DNA]</scope>
    <source>
        <strain>M.16.4 / Kamchatka #3</strain>
    </source>
</reference>
<protein>
    <recommendedName>
        <fullName evidence="1">Elongation factor 1-beta</fullName>
        <shortName evidence="1">EF-1-beta</shortName>
    </recommendedName>
    <alternativeName>
        <fullName evidence="1">aEF-1beta</fullName>
    </alternativeName>
</protein>
<dbReference type="EMBL" id="CP001402">
    <property type="protein sequence ID" value="ACR42571.1"/>
    <property type="molecule type" value="Genomic_DNA"/>
</dbReference>
<dbReference type="RefSeq" id="WP_012711931.1">
    <property type="nucleotide sequence ID" value="NC_012726.1"/>
</dbReference>
<dbReference type="SMR" id="C4KJ07"/>
<dbReference type="KEGG" id="sid:M164_1968"/>
<dbReference type="HOGENOM" id="CLU_165896_1_0_2"/>
<dbReference type="Proteomes" id="UP000001479">
    <property type="component" value="Chromosome"/>
</dbReference>
<dbReference type="GO" id="GO:0003746">
    <property type="term" value="F:translation elongation factor activity"/>
    <property type="evidence" value="ECO:0007669"/>
    <property type="project" value="UniProtKB-UniRule"/>
</dbReference>
<dbReference type="CDD" id="cd00292">
    <property type="entry name" value="EF1B"/>
    <property type="match status" value="1"/>
</dbReference>
<dbReference type="Gene3D" id="3.30.70.60">
    <property type="match status" value="1"/>
</dbReference>
<dbReference type="HAMAP" id="MF_00043">
    <property type="entry name" value="EF1_beta"/>
    <property type="match status" value="1"/>
</dbReference>
<dbReference type="InterPro" id="IPR036219">
    <property type="entry name" value="eEF-1beta-like_sf"/>
</dbReference>
<dbReference type="InterPro" id="IPR014038">
    <property type="entry name" value="EF1B_bsu/dsu_GNE"/>
</dbReference>
<dbReference type="InterPro" id="IPR014717">
    <property type="entry name" value="Transl_elong_EF1B/ribsomal_bS6"/>
</dbReference>
<dbReference type="InterPro" id="IPR004542">
    <property type="entry name" value="Transl_elong_EF1B_B_arc"/>
</dbReference>
<dbReference type="NCBIfam" id="TIGR00489">
    <property type="entry name" value="aEF-1_beta"/>
    <property type="match status" value="1"/>
</dbReference>
<dbReference type="NCBIfam" id="NF001670">
    <property type="entry name" value="PRK00435.1"/>
    <property type="match status" value="1"/>
</dbReference>
<dbReference type="PANTHER" id="PTHR39647">
    <property type="entry name" value="ELONGATION FACTOR 1-BETA"/>
    <property type="match status" value="1"/>
</dbReference>
<dbReference type="PANTHER" id="PTHR39647:SF1">
    <property type="entry name" value="ELONGATION FACTOR 1-BETA"/>
    <property type="match status" value="1"/>
</dbReference>
<dbReference type="Pfam" id="PF00736">
    <property type="entry name" value="EF1_GNE"/>
    <property type="match status" value="1"/>
</dbReference>
<dbReference type="PIRSF" id="PIRSF006521">
    <property type="entry name" value="Transl_elong_EF1B_B_arc"/>
    <property type="match status" value="1"/>
</dbReference>
<dbReference type="SMART" id="SM00888">
    <property type="entry name" value="EF1_GNE"/>
    <property type="match status" value="1"/>
</dbReference>
<dbReference type="SUPFAM" id="SSF54984">
    <property type="entry name" value="eEF-1beta-like"/>
    <property type="match status" value="1"/>
</dbReference>
<evidence type="ECO:0000255" key="1">
    <source>
        <dbReference type="HAMAP-Rule" id="MF_00043"/>
    </source>
</evidence>
<feature type="chain" id="PRO_1000202143" description="Elongation factor 1-beta">
    <location>
        <begin position="1"/>
        <end position="91"/>
    </location>
</feature>
<gene>
    <name evidence="1" type="primary">ef1b</name>
    <name type="ordered locus">M164_1968</name>
</gene>
<proteinExistence type="inferred from homology"/>
<keyword id="KW-0251">Elongation factor</keyword>
<keyword id="KW-0648">Protein biosynthesis</keyword>
<organism>
    <name type="scientific">Saccharolobus islandicus (strain M.16.4 / Kamchatka #3)</name>
    <name type="common">Sulfolobus islandicus</name>
    <dbReference type="NCBI Taxonomy" id="426118"/>
    <lineage>
        <taxon>Archaea</taxon>
        <taxon>Thermoproteota</taxon>
        <taxon>Thermoprotei</taxon>
        <taxon>Sulfolobales</taxon>
        <taxon>Sulfolobaceae</taxon>
        <taxon>Saccharolobus</taxon>
    </lineage>
</organism>
<sequence>MTDVLVVLKVFPDSDEVNLDNLYTDISNKLPKEYRIIRKETEPIAFGLNALILYVQMPEQTEGGTDNLEEVVNNIQGVSHAEVVGITRLGF</sequence>